<keyword id="KW-0611">Plant defense</keyword>
<keyword id="KW-1185">Reference proteome</keyword>
<keyword id="KW-0678">Repressor</keyword>
<keyword id="KW-0687">Ribonucleoprotein</keyword>
<keyword id="KW-0694">RNA-binding</keyword>
<keyword id="KW-0943">RNA-mediated gene silencing</keyword>
<keyword id="KW-0804">Transcription</keyword>
<keyword id="KW-0805">Transcription regulation</keyword>
<keyword id="KW-0810">Translation regulation</keyword>
<protein>
    <recommendedName>
        <fullName>Protein argonaute 7</fullName>
    </recommendedName>
    <alternativeName>
        <fullName>Protein ZIPPY</fullName>
    </alternativeName>
</protein>
<proteinExistence type="evidence at transcript level"/>
<accession>Q9C793</accession>
<dbReference type="EMBL" id="AC073178">
    <property type="protein sequence ID" value="AAG60096.1"/>
    <property type="molecule type" value="Genomic_DNA"/>
</dbReference>
<dbReference type="EMBL" id="CP002684">
    <property type="protein sequence ID" value="AEE34925.1"/>
    <property type="molecule type" value="Genomic_DNA"/>
</dbReference>
<dbReference type="EMBL" id="AY394564">
    <property type="protein sequence ID" value="AAQ92355.1"/>
    <property type="molecule type" value="mRNA"/>
</dbReference>
<dbReference type="RefSeq" id="NP_177103.1">
    <property type="nucleotide sequence ID" value="NM_105611.5"/>
</dbReference>
<dbReference type="SMR" id="Q9C793"/>
<dbReference type="FunCoup" id="Q9C793">
    <property type="interactions" value="6"/>
</dbReference>
<dbReference type="STRING" id="3702.Q9C793"/>
<dbReference type="iPTMnet" id="Q9C793"/>
<dbReference type="PaxDb" id="3702-AT1G69440.1"/>
<dbReference type="ProteomicsDB" id="244836"/>
<dbReference type="EnsemblPlants" id="AT1G69440.1">
    <property type="protein sequence ID" value="AT1G69440.1"/>
    <property type="gene ID" value="AT1G69440"/>
</dbReference>
<dbReference type="GeneID" id="843276"/>
<dbReference type="Gramene" id="AT1G69440.1">
    <property type="protein sequence ID" value="AT1G69440.1"/>
    <property type="gene ID" value="AT1G69440"/>
</dbReference>
<dbReference type="KEGG" id="ath:AT1G69440"/>
<dbReference type="Araport" id="AT1G69440"/>
<dbReference type="TAIR" id="AT1G69440">
    <property type="gene designation" value="AGO7"/>
</dbReference>
<dbReference type="eggNOG" id="KOG1041">
    <property type="taxonomic scope" value="Eukaryota"/>
</dbReference>
<dbReference type="HOGENOM" id="CLU_004544_0_1_1"/>
<dbReference type="InParanoid" id="Q9C793"/>
<dbReference type="OMA" id="FARCTRP"/>
<dbReference type="OrthoDB" id="10252740at2759"/>
<dbReference type="PhylomeDB" id="Q9C793"/>
<dbReference type="PRO" id="PR:Q9C793"/>
<dbReference type="Proteomes" id="UP000006548">
    <property type="component" value="Chromosome 1"/>
</dbReference>
<dbReference type="ExpressionAtlas" id="Q9C793">
    <property type="expression patterns" value="baseline and differential"/>
</dbReference>
<dbReference type="GO" id="GO:0005737">
    <property type="term" value="C:cytoplasm"/>
    <property type="evidence" value="ECO:0000314"/>
    <property type="project" value="TAIR"/>
</dbReference>
<dbReference type="GO" id="GO:0036464">
    <property type="term" value="C:cytoplasmic ribonucleoprotein granule"/>
    <property type="evidence" value="ECO:0000314"/>
    <property type="project" value="FlyBase"/>
</dbReference>
<dbReference type="GO" id="GO:1990904">
    <property type="term" value="C:ribonucleoprotein complex"/>
    <property type="evidence" value="ECO:0007669"/>
    <property type="project" value="UniProtKB-KW"/>
</dbReference>
<dbReference type="GO" id="GO:0003723">
    <property type="term" value="F:RNA binding"/>
    <property type="evidence" value="ECO:0007669"/>
    <property type="project" value="UniProtKB-KW"/>
</dbReference>
<dbReference type="GO" id="GO:0051607">
    <property type="term" value="P:defense response to virus"/>
    <property type="evidence" value="ECO:0000314"/>
    <property type="project" value="TAIR"/>
</dbReference>
<dbReference type="GO" id="GO:0010599">
    <property type="term" value="P:lsiRNA processing"/>
    <property type="evidence" value="ECO:0000315"/>
    <property type="project" value="TAIR"/>
</dbReference>
<dbReference type="GO" id="GO:0035278">
    <property type="term" value="P:miRNA-mediated gene silencing by inhibition of translation"/>
    <property type="evidence" value="ECO:0000314"/>
    <property type="project" value="FlyBase"/>
</dbReference>
<dbReference type="GO" id="GO:0035195">
    <property type="term" value="P:miRNA-mediated post-transcriptional gene silencing"/>
    <property type="evidence" value="ECO:0000304"/>
    <property type="project" value="TAIR"/>
</dbReference>
<dbReference type="GO" id="GO:0040034">
    <property type="term" value="P:regulation of development, heterochronic"/>
    <property type="evidence" value="ECO:0000315"/>
    <property type="project" value="TAIR"/>
</dbReference>
<dbReference type="GO" id="GO:0010267">
    <property type="term" value="P:ta-siRNA processing"/>
    <property type="evidence" value="ECO:0000315"/>
    <property type="project" value="TAIR"/>
</dbReference>
<dbReference type="GO" id="GO:0010050">
    <property type="term" value="P:vegetative phase change"/>
    <property type="evidence" value="ECO:0000315"/>
    <property type="project" value="TAIR"/>
</dbReference>
<dbReference type="CDD" id="cd02846">
    <property type="entry name" value="PAZ_argonaute_like"/>
    <property type="match status" value="1"/>
</dbReference>
<dbReference type="CDD" id="cd04657">
    <property type="entry name" value="Piwi_ago-like"/>
    <property type="match status" value="1"/>
</dbReference>
<dbReference type="FunFam" id="3.30.420.10:FF:000013">
    <property type="entry name" value="protein argonaute 10-like"/>
    <property type="match status" value="1"/>
</dbReference>
<dbReference type="FunFam" id="2.170.260.10:FF:000008">
    <property type="entry name" value="Protein argonaute 7"/>
    <property type="match status" value="1"/>
</dbReference>
<dbReference type="Gene3D" id="3.40.50.2300">
    <property type="match status" value="1"/>
</dbReference>
<dbReference type="Gene3D" id="2.170.260.10">
    <property type="entry name" value="paz domain"/>
    <property type="match status" value="1"/>
</dbReference>
<dbReference type="Gene3D" id="3.30.420.10">
    <property type="entry name" value="Ribonuclease H-like superfamily/Ribonuclease H"/>
    <property type="match status" value="1"/>
</dbReference>
<dbReference type="InterPro" id="IPR014811">
    <property type="entry name" value="ArgoL1"/>
</dbReference>
<dbReference type="InterPro" id="IPR032472">
    <property type="entry name" value="ArgoL2"/>
</dbReference>
<dbReference type="InterPro" id="IPR032474">
    <property type="entry name" value="Argonaute_N"/>
</dbReference>
<dbReference type="InterPro" id="IPR003100">
    <property type="entry name" value="PAZ_dom"/>
</dbReference>
<dbReference type="InterPro" id="IPR036085">
    <property type="entry name" value="PAZ_dom_sf"/>
</dbReference>
<dbReference type="InterPro" id="IPR003165">
    <property type="entry name" value="Piwi"/>
</dbReference>
<dbReference type="InterPro" id="IPR045246">
    <property type="entry name" value="Piwi_ago-like"/>
</dbReference>
<dbReference type="InterPro" id="IPR012337">
    <property type="entry name" value="RNaseH-like_sf"/>
</dbReference>
<dbReference type="InterPro" id="IPR036397">
    <property type="entry name" value="RNaseH_sf"/>
</dbReference>
<dbReference type="PANTHER" id="PTHR22891">
    <property type="entry name" value="EUKARYOTIC TRANSLATION INITIATION FACTOR 2C"/>
    <property type="match status" value="1"/>
</dbReference>
<dbReference type="Pfam" id="PF08699">
    <property type="entry name" value="ArgoL1"/>
    <property type="match status" value="1"/>
</dbReference>
<dbReference type="Pfam" id="PF16488">
    <property type="entry name" value="ArgoL2"/>
    <property type="match status" value="1"/>
</dbReference>
<dbReference type="Pfam" id="PF16486">
    <property type="entry name" value="ArgoN"/>
    <property type="match status" value="1"/>
</dbReference>
<dbReference type="Pfam" id="PF02170">
    <property type="entry name" value="PAZ"/>
    <property type="match status" value="1"/>
</dbReference>
<dbReference type="Pfam" id="PF02171">
    <property type="entry name" value="Piwi"/>
    <property type="match status" value="1"/>
</dbReference>
<dbReference type="SMART" id="SM01163">
    <property type="entry name" value="DUF1785"/>
    <property type="match status" value="1"/>
</dbReference>
<dbReference type="SMART" id="SM00949">
    <property type="entry name" value="PAZ"/>
    <property type="match status" value="1"/>
</dbReference>
<dbReference type="SMART" id="SM00950">
    <property type="entry name" value="Piwi"/>
    <property type="match status" value="1"/>
</dbReference>
<dbReference type="SUPFAM" id="SSF101690">
    <property type="entry name" value="PAZ domain"/>
    <property type="match status" value="1"/>
</dbReference>
<dbReference type="SUPFAM" id="SSF53098">
    <property type="entry name" value="Ribonuclease H-like"/>
    <property type="match status" value="1"/>
</dbReference>
<dbReference type="PROSITE" id="PS50821">
    <property type="entry name" value="PAZ"/>
    <property type="match status" value="1"/>
</dbReference>
<dbReference type="PROSITE" id="PS50822">
    <property type="entry name" value="PIWI"/>
    <property type="match status" value="1"/>
</dbReference>
<comment type="function">
    <text evidence="4 5 6 7 8 9 10 11">Involved in RNA-mediated post-transcriptional gene silencing (PTGS). Main component of the RNA-induced silencing complex (RISC) that binds to a short guide RNA such as a microRNA (miRNA) or small interfering RNA (siRNA). RISC uses the mature miRNA or siRNA as a guide for slicer-directed cleavage of homologous mRNAs to repress gene expression. Required for the processing of 21 nucleotide trans-acting siRNAs (ta-siRNAs) derived from TAS3a transcripts. Associates preferentially with the microRNA (miRNA) miR390 which guides the cleavage of TAS3 precursor RNA. Seems to act as miR390 specific slicer. Associates mainly with small RNAs of 21 nucleotide in length and with a 5' terminal adenosine. Acts in the RDR6/SGS3/DCL4/AGO7 trans-acting siRNA pathway involved in leaf developmental timing. Does not seem to act on leaf polarity. Required for the production of the 30-40nt bacterial-induced long siRNAs (lsiRNA). Involved in antiviral RNA silencing by contributing to efficient viral RNAs clearance. Targets less structured viral RNAs than AGO1 which is capable of targeting RNAs with more compact structures.</text>
</comment>
<comment type="tissue specificity">
    <text evidence="10">Expressed in leaves and floral buds, and at low levels in roots.</text>
</comment>
<comment type="disruption phenotype">
    <text evidence="4">First leaves are elongated and curl downward. Increased number of hydathodes per leaf. Accelerated appearance of abaxial trichomes. Presence of stigmatic tissue in the middle of the septum at the apical end of the carpels.</text>
</comment>
<comment type="similarity">
    <text evidence="12">Belongs to the argonaute family. Ago subfamily.</text>
</comment>
<evidence type="ECO:0000255" key="1">
    <source>
        <dbReference type="PROSITE-ProRule" id="PRU00142"/>
    </source>
</evidence>
<evidence type="ECO:0000255" key="2">
    <source>
        <dbReference type="PROSITE-ProRule" id="PRU00150"/>
    </source>
</evidence>
<evidence type="ECO:0000256" key="3">
    <source>
        <dbReference type="SAM" id="MobiDB-lite"/>
    </source>
</evidence>
<evidence type="ECO:0000269" key="4">
    <source>
    </source>
</evidence>
<evidence type="ECO:0000269" key="5">
    <source>
    </source>
</evidence>
<evidence type="ECO:0000269" key="6">
    <source>
    </source>
</evidence>
<evidence type="ECO:0000269" key="7">
    <source>
    </source>
</evidence>
<evidence type="ECO:0000269" key="8">
    <source>
    </source>
</evidence>
<evidence type="ECO:0000269" key="9">
    <source>
    </source>
</evidence>
<evidence type="ECO:0000269" key="10">
    <source>
    </source>
</evidence>
<evidence type="ECO:0000269" key="11">
    <source>
    </source>
</evidence>
<evidence type="ECO:0000305" key="12"/>
<reference key="1">
    <citation type="journal article" date="2003" name="Curr. Biol.">
        <title>The Arabidopsis heterochronic gene ZIPPY is an ARGONAUTE family member.</title>
        <authorList>
            <person name="Hunter C."/>
            <person name="Sun H."/>
            <person name="Poethig R.S."/>
        </authorList>
    </citation>
    <scope>NUCLEOTIDE SEQUENCE [MRNA]</scope>
    <scope>FUNCTION</scope>
    <scope>DISRUPTION PHENOTYPE</scope>
    <source>
        <strain>cv. Columbia</strain>
    </source>
</reference>
<reference key="2">
    <citation type="journal article" date="2000" name="Nature">
        <title>Sequence and analysis of chromosome 1 of the plant Arabidopsis thaliana.</title>
        <authorList>
            <person name="Theologis A."/>
            <person name="Ecker J.R."/>
            <person name="Palm C.J."/>
            <person name="Federspiel N.A."/>
            <person name="Kaul S."/>
            <person name="White O."/>
            <person name="Alonso J."/>
            <person name="Altafi H."/>
            <person name="Araujo R."/>
            <person name="Bowman C.L."/>
            <person name="Brooks S.Y."/>
            <person name="Buehler E."/>
            <person name="Chan A."/>
            <person name="Chao Q."/>
            <person name="Chen H."/>
            <person name="Cheuk R.F."/>
            <person name="Chin C.W."/>
            <person name="Chung M.K."/>
            <person name="Conn L."/>
            <person name="Conway A.B."/>
            <person name="Conway A.R."/>
            <person name="Creasy T.H."/>
            <person name="Dewar K."/>
            <person name="Dunn P."/>
            <person name="Etgu P."/>
            <person name="Feldblyum T.V."/>
            <person name="Feng J.-D."/>
            <person name="Fong B."/>
            <person name="Fujii C.Y."/>
            <person name="Gill J.E."/>
            <person name="Goldsmith A.D."/>
            <person name="Haas B."/>
            <person name="Hansen N.F."/>
            <person name="Hughes B."/>
            <person name="Huizar L."/>
            <person name="Hunter J.L."/>
            <person name="Jenkins J."/>
            <person name="Johnson-Hopson C."/>
            <person name="Khan S."/>
            <person name="Khaykin E."/>
            <person name="Kim C.J."/>
            <person name="Koo H.L."/>
            <person name="Kremenetskaia I."/>
            <person name="Kurtz D.B."/>
            <person name="Kwan A."/>
            <person name="Lam B."/>
            <person name="Langin-Hooper S."/>
            <person name="Lee A."/>
            <person name="Lee J.M."/>
            <person name="Lenz C.A."/>
            <person name="Li J.H."/>
            <person name="Li Y.-P."/>
            <person name="Lin X."/>
            <person name="Liu S.X."/>
            <person name="Liu Z.A."/>
            <person name="Luros J.S."/>
            <person name="Maiti R."/>
            <person name="Marziali A."/>
            <person name="Militscher J."/>
            <person name="Miranda M."/>
            <person name="Nguyen M."/>
            <person name="Nierman W.C."/>
            <person name="Osborne B.I."/>
            <person name="Pai G."/>
            <person name="Peterson J."/>
            <person name="Pham P.K."/>
            <person name="Rizzo M."/>
            <person name="Rooney T."/>
            <person name="Rowley D."/>
            <person name="Sakano H."/>
            <person name="Salzberg S.L."/>
            <person name="Schwartz J.R."/>
            <person name="Shinn P."/>
            <person name="Southwick A.M."/>
            <person name="Sun H."/>
            <person name="Tallon L.J."/>
            <person name="Tambunga G."/>
            <person name="Toriumi M.J."/>
            <person name="Town C.D."/>
            <person name="Utterback T."/>
            <person name="Van Aken S."/>
            <person name="Vaysberg M."/>
            <person name="Vysotskaia V.S."/>
            <person name="Walker M."/>
            <person name="Wu D."/>
            <person name="Yu G."/>
            <person name="Fraser C.M."/>
            <person name="Venter J.C."/>
            <person name="Davis R.W."/>
        </authorList>
    </citation>
    <scope>NUCLEOTIDE SEQUENCE [LARGE SCALE GENOMIC DNA]</scope>
    <source>
        <strain>cv. Columbia</strain>
    </source>
</reference>
<reference key="3">
    <citation type="journal article" date="2017" name="Plant J.">
        <title>Araport11: a complete reannotation of the Arabidopsis thaliana reference genome.</title>
        <authorList>
            <person name="Cheng C.Y."/>
            <person name="Krishnakumar V."/>
            <person name="Chan A.P."/>
            <person name="Thibaud-Nissen F."/>
            <person name="Schobel S."/>
            <person name="Town C.D."/>
        </authorList>
    </citation>
    <scope>GENOME REANNOTATION</scope>
    <source>
        <strain>cv. Columbia</strain>
    </source>
</reference>
<reference key="4">
    <citation type="journal article" date="2006" name="Curr. Biol.">
        <title>DRB4-dependent TAS3 trans-acting siRNAs control leaf morphology through AGO7.</title>
        <authorList>
            <person name="Adenot X."/>
            <person name="Elmayan T."/>
            <person name="Lauressergues D."/>
            <person name="Boutet S."/>
            <person name="Bouche N."/>
            <person name="Gasciolli V."/>
            <person name="Vaucheret H."/>
        </authorList>
    </citation>
    <scope>FUNCTION</scope>
</reference>
<reference key="5">
    <citation type="journal article" date="2006" name="Curr. Biol.">
        <title>Specification of leaf polarity in Arabidopsis via the trans-acting siRNA pathway.</title>
        <authorList>
            <person name="Garcia D."/>
            <person name="Collier S.A."/>
            <person name="Byrne M.E."/>
            <person name="Martienssen R.A."/>
        </authorList>
    </citation>
    <scope>FUNCTION</scope>
</reference>
<reference key="6">
    <citation type="journal article" date="2006" name="Development">
        <title>Trans-acting siRNA-mediated repression of ETTIN and ARF4 regulates heteroblasty in Arabidopsis.</title>
        <authorList>
            <person name="Hunter C."/>
            <person name="Willmann M.R."/>
            <person name="Wu G."/>
            <person name="Yoshikawa M."/>
            <person name="de la Luz Gutierrez-Nava M."/>
            <person name="Poethig S.R."/>
        </authorList>
    </citation>
    <scope>FUNCTION</scope>
</reference>
<reference key="7">
    <citation type="journal article" date="2006" name="Plant Cell Physiol.">
        <title>Genetic interaction between the AS1-AS2 and RDR6-SGS3-AGO7 pathways for leaf morphogenesis.</title>
        <authorList>
            <person name="Xu L."/>
            <person name="Yang L."/>
            <person name="Pi L."/>
            <person name="Liu Q."/>
            <person name="Ling Q."/>
            <person name="Wang H."/>
            <person name="Poethig R.S."/>
            <person name="Huang H."/>
        </authorList>
    </citation>
    <scope>FUNCTION</scope>
</reference>
<reference key="8">
    <citation type="journal article" date="2007" name="Genes Dev.">
        <title>A novel class of bacteria-induced small RNAs in Arabidopsis.</title>
        <authorList>
            <person name="Katiyar-Agarwal S."/>
            <person name="Gao S."/>
            <person name="Vivian-Smith A."/>
            <person name="Jin H."/>
        </authorList>
    </citation>
    <scope>FUNCTION</scope>
</reference>
<reference key="9">
    <citation type="journal article" date="2008" name="Cell">
        <title>Specificity of ARGONAUTE7-miR390 interaction and dual functionality in TAS3 trans-acting siRNA formation.</title>
        <authorList>
            <person name="Montgomery T.A."/>
            <person name="Howell M.D."/>
            <person name="Cuperus J.T."/>
            <person name="Li D."/>
            <person name="Hansen J.E."/>
            <person name="Alexander A.L."/>
            <person name="Chapman E.J."/>
            <person name="Fahlgren N."/>
            <person name="Allen E."/>
            <person name="Carrington J.C."/>
        </authorList>
    </citation>
    <scope>FUNCTION</scope>
    <scope>TISSUE SPECIFICITY</scope>
</reference>
<reference key="10">
    <citation type="journal article" date="2008" name="Proc. Natl. Acad. Sci. U.S.A.">
        <title>Arabidopsis DRB4, AGO1, AGO7, and RDR6 participate in a DCL4-initiated antiviral RNA silencing pathway negatively regulated by DCL1.</title>
        <authorList>
            <person name="Qu F."/>
            <person name="Ye X."/>
            <person name="Morris T.J."/>
        </authorList>
    </citation>
    <scope>FUNCTION</scope>
</reference>
<organism>
    <name type="scientific">Arabidopsis thaliana</name>
    <name type="common">Mouse-ear cress</name>
    <dbReference type="NCBI Taxonomy" id="3702"/>
    <lineage>
        <taxon>Eukaryota</taxon>
        <taxon>Viridiplantae</taxon>
        <taxon>Streptophyta</taxon>
        <taxon>Embryophyta</taxon>
        <taxon>Tracheophyta</taxon>
        <taxon>Spermatophyta</taxon>
        <taxon>Magnoliopsida</taxon>
        <taxon>eudicotyledons</taxon>
        <taxon>Gunneridae</taxon>
        <taxon>Pentapetalae</taxon>
        <taxon>rosids</taxon>
        <taxon>malvids</taxon>
        <taxon>Brassicales</taxon>
        <taxon>Brassicaceae</taxon>
        <taxon>Camelineae</taxon>
        <taxon>Arabidopsis</taxon>
    </lineage>
</organism>
<sequence length="990" mass="113397">MEEKTHHHHHSTNKHIPSSKSRTPLLHKPYHHHVQTNPPPFLLHPSSHQNLNLVASNLPSSYYYYYYCYFYSQFHNSLPPPPPPHLLPLSPPLPPLLPLPPPHSMTRFHKSLPVSQVVERKQQHQQKKKIQVSNNKVSGSIAIEEAALVVAKRPDFGGQDGSVIYLLANHFLVKFDSSQRIYHYNVEISPQPSKEIARMIKQKLVETDRNSFSGVVPAFDGRQNIYSPVEFQGDRLEFFVNLPIPSCKAVMNYGDLREKQPQKKIEKLFRVNMKLVSKFDGKEQRKEGEDWAPLPPEYIHALDVILRENPMEKCTSIGRSFYSSSMGGSKEIGGGAVGLRGFFQSLRHTQQGLALNMDLSITAFHESIGVIAYLQKRLEFLTDLPRNKGRELSLEEKREVEKALKNIRVFVCHRETVQRYRVYGLTEEITENIWFPDREGKYLRLMSYFKDHYGYEIQFKNLPCLQISRARPCYLPMELCMICEGQKFLGKLSDDQAAKIMKMGCQKPNERKAIIDKVMTGSVGPSSGNQTREFNLEVSREMTLLKGRILQPPKLKLDRPRNLKESKVFKGTRIERWALMSIGGSSDQKSTIPKFINELTQKCEHLGVFLSKNTLSSTFFEPSHILNNISLLESKLKEIQRAASNNLQLIICVMEKKHKGYGDLKRISETRIGVVTQCCLYPNITKLSSQFVSNLALKINAKIGGSMTELYNSIPSHIPRLLRPDEPVIFMGADVTHPHPFDDCSPSVAAVVGSINWPEANRYVSRMRSQTHRQEIIQDLDLMVKELLDDFYKAVKKLPNRIIFFRDGVSETQFKKVLQEELQSIKTACSKFQDYNPSITFAVVQKRHHTRLFRCDPDHENIPPGTVVDTVITHPKEFDFYLCSHLGVKGTSRPTHYHILWDENEFTSDELQRLVYNLCYTFVRCTKPISIVPPAYYAHLAAYRGRLYIERSSESNGGSMNPSSVSRVGPPKTIPLPKLSDNVKNLMFYC</sequence>
<feature type="chain" id="PRO_0000404669" description="Protein argonaute 7">
    <location>
        <begin position="1"/>
        <end position="990"/>
    </location>
</feature>
<feature type="domain" description="PAZ" evidence="1">
    <location>
        <begin position="379"/>
        <end position="484"/>
    </location>
</feature>
<feature type="domain" description="Piwi" evidence="2">
    <location>
        <begin position="649"/>
        <end position="950"/>
    </location>
</feature>
<feature type="region of interest" description="Disordered" evidence="3">
    <location>
        <begin position="1"/>
        <end position="25"/>
    </location>
</feature>
<feature type="region of interest" description="Disordered" evidence="3">
    <location>
        <begin position="953"/>
        <end position="973"/>
    </location>
</feature>
<feature type="compositionally biased region" description="Basic residues" evidence="3">
    <location>
        <begin position="1"/>
        <end position="13"/>
    </location>
</feature>
<feature type="compositionally biased region" description="Polar residues" evidence="3">
    <location>
        <begin position="954"/>
        <end position="966"/>
    </location>
</feature>
<gene>
    <name type="primary">AGO7</name>
    <name type="synonym">ZIP</name>
    <name type="ordered locus">At1g69440</name>
    <name type="ORF">F10D13.11</name>
</gene>
<name>AGO7_ARATH</name>